<reference key="1">
    <citation type="journal article" date="2007" name="PLoS Genet.">
        <title>A tale of two oxidation states: bacterial colonization of arsenic-rich environments.</title>
        <authorList>
            <person name="Muller D."/>
            <person name="Medigue C."/>
            <person name="Koechler S."/>
            <person name="Barbe V."/>
            <person name="Barakat M."/>
            <person name="Talla E."/>
            <person name="Bonnefoy V."/>
            <person name="Krin E."/>
            <person name="Arsene-Ploetze F."/>
            <person name="Carapito C."/>
            <person name="Chandler M."/>
            <person name="Cournoyer B."/>
            <person name="Cruveiller S."/>
            <person name="Dossat C."/>
            <person name="Duval S."/>
            <person name="Heymann M."/>
            <person name="Leize E."/>
            <person name="Lieutaud A."/>
            <person name="Lievremont D."/>
            <person name="Makita Y."/>
            <person name="Mangenot S."/>
            <person name="Nitschke W."/>
            <person name="Ortet P."/>
            <person name="Perdrial N."/>
            <person name="Schoepp B."/>
            <person name="Siguier P."/>
            <person name="Simeonova D.D."/>
            <person name="Rouy Z."/>
            <person name="Segurens B."/>
            <person name="Turlin E."/>
            <person name="Vallenet D."/>
            <person name="van Dorsselaer A."/>
            <person name="Weiss S."/>
            <person name="Weissenbach J."/>
            <person name="Lett M.-C."/>
            <person name="Danchin A."/>
            <person name="Bertin P.N."/>
        </authorList>
    </citation>
    <scope>NUCLEOTIDE SEQUENCE [LARGE SCALE GENOMIC DNA]</scope>
    <source>
        <strain>ULPAs1</strain>
    </source>
</reference>
<evidence type="ECO:0000255" key="1">
    <source>
        <dbReference type="HAMAP-Rule" id="MF_00523"/>
    </source>
</evidence>
<name>LPXD_HERAR</name>
<proteinExistence type="inferred from homology"/>
<feature type="chain" id="PRO_1000050943" description="UDP-3-O-acylglucosamine N-acyltransferase">
    <location>
        <begin position="1"/>
        <end position="350"/>
    </location>
</feature>
<feature type="active site" description="Proton acceptor" evidence="1">
    <location>
        <position position="244"/>
    </location>
</feature>
<accession>A4G4T1</accession>
<protein>
    <recommendedName>
        <fullName evidence="1">UDP-3-O-acylglucosamine N-acyltransferase</fullName>
        <ecNumber evidence="1">2.3.1.191</ecNumber>
    </recommendedName>
</protein>
<organism>
    <name type="scientific">Herminiimonas arsenicoxydans</name>
    <dbReference type="NCBI Taxonomy" id="204773"/>
    <lineage>
        <taxon>Bacteria</taxon>
        <taxon>Pseudomonadati</taxon>
        <taxon>Pseudomonadota</taxon>
        <taxon>Betaproteobacteria</taxon>
        <taxon>Burkholderiales</taxon>
        <taxon>Oxalobacteraceae</taxon>
        <taxon>Herminiimonas</taxon>
    </lineage>
</organism>
<dbReference type="EC" id="2.3.1.191" evidence="1"/>
<dbReference type="EMBL" id="CU207211">
    <property type="protein sequence ID" value="CAL61518.1"/>
    <property type="molecule type" value="Genomic_DNA"/>
</dbReference>
<dbReference type="SMR" id="A4G4T1"/>
<dbReference type="STRING" id="204773.HEAR1345"/>
<dbReference type="KEGG" id="har:HEAR1345"/>
<dbReference type="eggNOG" id="COG1044">
    <property type="taxonomic scope" value="Bacteria"/>
</dbReference>
<dbReference type="HOGENOM" id="CLU_049865_0_1_4"/>
<dbReference type="OrthoDB" id="9784739at2"/>
<dbReference type="UniPathway" id="UPA00973"/>
<dbReference type="Proteomes" id="UP000006697">
    <property type="component" value="Chromosome"/>
</dbReference>
<dbReference type="GO" id="GO:0016020">
    <property type="term" value="C:membrane"/>
    <property type="evidence" value="ECO:0007669"/>
    <property type="project" value="GOC"/>
</dbReference>
<dbReference type="GO" id="GO:0016410">
    <property type="term" value="F:N-acyltransferase activity"/>
    <property type="evidence" value="ECO:0007669"/>
    <property type="project" value="InterPro"/>
</dbReference>
<dbReference type="GO" id="GO:0009245">
    <property type="term" value="P:lipid A biosynthetic process"/>
    <property type="evidence" value="ECO:0007669"/>
    <property type="project" value="UniProtKB-UniRule"/>
</dbReference>
<dbReference type="CDD" id="cd03352">
    <property type="entry name" value="LbH_LpxD"/>
    <property type="match status" value="1"/>
</dbReference>
<dbReference type="Gene3D" id="2.160.10.10">
    <property type="entry name" value="Hexapeptide repeat proteins"/>
    <property type="match status" value="1"/>
</dbReference>
<dbReference type="Gene3D" id="3.40.1390.10">
    <property type="entry name" value="MurE/MurF, N-terminal domain"/>
    <property type="match status" value="1"/>
</dbReference>
<dbReference type="HAMAP" id="MF_00523">
    <property type="entry name" value="LpxD"/>
    <property type="match status" value="1"/>
</dbReference>
<dbReference type="InterPro" id="IPR007691">
    <property type="entry name" value="LpxD"/>
</dbReference>
<dbReference type="InterPro" id="IPR011004">
    <property type="entry name" value="Trimer_LpxA-like_sf"/>
</dbReference>
<dbReference type="InterPro" id="IPR020573">
    <property type="entry name" value="UDP_GlcNAc_AcTrfase_non-rep"/>
</dbReference>
<dbReference type="NCBIfam" id="TIGR01853">
    <property type="entry name" value="lipid_A_lpxD"/>
    <property type="match status" value="1"/>
</dbReference>
<dbReference type="NCBIfam" id="NF002060">
    <property type="entry name" value="PRK00892.1"/>
    <property type="match status" value="1"/>
</dbReference>
<dbReference type="PANTHER" id="PTHR43378">
    <property type="entry name" value="UDP-3-O-ACYLGLUCOSAMINE N-ACYLTRANSFERASE"/>
    <property type="match status" value="1"/>
</dbReference>
<dbReference type="PANTHER" id="PTHR43378:SF2">
    <property type="entry name" value="UDP-3-O-ACYLGLUCOSAMINE N-ACYLTRANSFERASE 1, MITOCHONDRIAL-RELATED"/>
    <property type="match status" value="1"/>
</dbReference>
<dbReference type="Pfam" id="PF04613">
    <property type="entry name" value="LpxD"/>
    <property type="match status" value="1"/>
</dbReference>
<dbReference type="SUPFAM" id="SSF51161">
    <property type="entry name" value="Trimeric LpxA-like enzymes"/>
    <property type="match status" value="1"/>
</dbReference>
<keyword id="KW-0012">Acyltransferase</keyword>
<keyword id="KW-0441">Lipid A biosynthesis</keyword>
<keyword id="KW-0444">Lipid biosynthesis</keyword>
<keyword id="KW-0443">Lipid metabolism</keyword>
<keyword id="KW-1185">Reference proteome</keyword>
<keyword id="KW-0677">Repeat</keyword>
<keyword id="KW-0808">Transferase</keyword>
<gene>
    <name evidence="1" type="primary">lpxD</name>
    <name type="ordered locus">HEAR1345</name>
</gene>
<comment type="function">
    <text evidence="1">Catalyzes the N-acylation of UDP-3-O-acylglucosamine using 3-hydroxyacyl-ACP as the acyl donor. Is involved in the biosynthesis of lipid A, a phosphorylated glycolipid that anchors the lipopolysaccharide to the outer membrane of the cell.</text>
</comment>
<comment type="catalytic activity">
    <reaction evidence="1">
        <text>a UDP-3-O-[(3R)-3-hydroxyacyl]-alpha-D-glucosamine + a (3R)-hydroxyacyl-[ACP] = a UDP-2-N,3-O-bis[(3R)-3-hydroxyacyl]-alpha-D-glucosamine + holo-[ACP] + H(+)</text>
        <dbReference type="Rhea" id="RHEA:53836"/>
        <dbReference type="Rhea" id="RHEA-COMP:9685"/>
        <dbReference type="Rhea" id="RHEA-COMP:9945"/>
        <dbReference type="ChEBI" id="CHEBI:15378"/>
        <dbReference type="ChEBI" id="CHEBI:64479"/>
        <dbReference type="ChEBI" id="CHEBI:78827"/>
        <dbReference type="ChEBI" id="CHEBI:137740"/>
        <dbReference type="ChEBI" id="CHEBI:137748"/>
        <dbReference type="EC" id="2.3.1.191"/>
    </reaction>
</comment>
<comment type="pathway">
    <text evidence="1">Bacterial outer membrane biogenesis; LPS lipid A biosynthesis.</text>
</comment>
<comment type="subunit">
    <text evidence="1">Homotrimer.</text>
</comment>
<comment type="similarity">
    <text evidence="1">Belongs to the transferase hexapeptide repeat family. LpxD subfamily.</text>
</comment>
<sequence length="350" mass="36219">MSTRLGDLVERLGGRLIGDADIEVVGIAPLGDADASHITFLSNPKLRGQAAQTRAAALILSAADDEIVAANYQGARIVADNPYAYFARAAQLFAALHAYVAPAGIHPTASVDPQAKVAASASIGPHVTVEAGAIIENACVIDAGCFIGRNARIGAATHFYPRVTFLAGCSIGQRGIVHPGAVIGADGFGFANEGGAWIKIPQTGAVSIGDDVEIGANTSIDRGALADTVIEDGVKLDNQIQIGHNCHIGAHTAMAGCVGVAGSAVIGKYCTFGGAAMVLGHLTIADRVHISSGSLVSRSIKEPGQYTGFYPLAKNAEWEKSAVIVRNLAAMREKIREMEKTIKSLGDEQE</sequence>